<gene>
    <name type="primary">DIR22</name>
    <name type="ordered locus">At3g13660</name>
    <name type="ORF">MMM17</name>
</gene>
<comment type="function">
    <text evidence="1">Dirigent proteins impart stereoselectivity on the phenoxy radical-coupling reaction, yielding optically active lignans from two molecules of coniferyl alcohol in the biosynthesis of lignans, flavonolignans, and alkaloids and thus plays a central role in plant secondary metabolism.</text>
</comment>
<comment type="subunit">
    <text evidence="1">Homodimer.</text>
</comment>
<comment type="subcellular location">
    <subcellularLocation>
        <location evidence="1">Secreted</location>
        <location evidence="1">Extracellular space</location>
        <location evidence="1">Apoplast</location>
    </subcellularLocation>
</comment>
<comment type="similarity">
    <text evidence="3">Belongs to the plant dirigent protein family.</text>
</comment>
<protein>
    <recommendedName>
        <fullName>Dirigent protein 22</fullName>
        <shortName>AtDIR22</shortName>
    </recommendedName>
</protein>
<name>DIR22_ARATH</name>
<reference key="1">
    <citation type="journal article" date="2000" name="DNA Res.">
        <title>Structural analysis of Arabidopsis thaliana chromosome 3. II. Sequence features of the 4,251,695 bp regions covered by 90 P1, TAC and BAC clones.</title>
        <authorList>
            <person name="Kaneko T."/>
            <person name="Katoh T."/>
            <person name="Sato S."/>
            <person name="Nakamura Y."/>
            <person name="Asamizu E."/>
            <person name="Tabata S."/>
        </authorList>
    </citation>
    <scope>NUCLEOTIDE SEQUENCE [LARGE SCALE GENOMIC DNA]</scope>
    <source>
        <strain>cv. Columbia</strain>
    </source>
</reference>
<reference key="2">
    <citation type="journal article" date="2017" name="Plant J.">
        <title>Araport11: a complete reannotation of the Arabidopsis thaliana reference genome.</title>
        <authorList>
            <person name="Cheng C.Y."/>
            <person name="Krishnakumar V."/>
            <person name="Chan A.P."/>
            <person name="Thibaud-Nissen F."/>
            <person name="Schobel S."/>
            <person name="Town C.D."/>
        </authorList>
    </citation>
    <scope>GENOME REANNOTATION</scope>
    <source>
        <strain>cv. Columbia</strain>
    </source>
</reference>
<reference key="3">
    <citation type="submission" date="2004-09" db="EMBL/GenBank/DDBJ databases">
        <title>Arabidopsis ORF clones.</title>
        <authorList>
            <person name="Cheuk R.F."/>
            <person name="Chen H."/>
            <person name="Kim C.J."/>
            <person name="Shinn P."/>
            <person name="Ecker J.R."/>
        </authorList>
    </citation>
    <scope>NUCLEOTIDE SEQUENCE [LARGE SCALE MRNA]</scope>
    <source>
        <strain>cv. Columbia</strain>
    </source>
</reference>
<reference key="4">
    <citation type="journal article" date="2007" name="Phytochemistry">
        <title>Dirigent proteins in conifer defense II: Extended gene discovery, phylogeny, and constitutive and stress-induced gene expression in spruce (Picea spp.).</title>
        <authorList>
            <person name="Ralph S.G."/>
            <person name="Jancsik S."/>
            <person name="Bohlmann J."/>
        </authorList>
    </citation>
    <scope>GENE FAMILY</scope>
    <scope>NOMENCLATURE</scope>
</reference>
<sequence>MIQKAVSNSSTSFGSITMTDNALTSDVPVNSTVVGQSQGFYAGAAQRELGFLMAMNFAFKTGKYNGSTITILGRNTVFSKVREMTVVGGSGIFRLARGYVEARTKWFDPKTGDATVEYNCYVLHY</sequence>
<accession>Q66GI2</accession>
<dbReference type="EMBL" id="AP001307">
    <property type="status" value="NOT_ANNOTATED_CDS"/>
    <property type="molecule type" value="Genomic_DNA"/>
</dbReference>
<dbReference type="EMBL" id="CP002686">
    <property type="protein sequence ID" value="AEE75388.1"/>
    <property type="molecule type" value="Genomic_DNA"/>
</dbReference>
<dbReference type="EMBL" id="BT015420">
    <property type="protein sequence ID" value="AAU06129.1"/>
    <property type="molecule type" value="mRNA"/>
</dbReference>
<dbReference type="EMBL" id="BT015654">
    <property type="protein sequence ID" value="AAU15153.1"/>
    <property type="molecule type" value="mRNA"/>
</dbReference>
<dbReference type="RefSeq" id="NP_187975.2">
    <property type="nucleotide sequence ID" value="NM_112212.4"/>
</dbReference>
<dbReference type="SMR" id="Q66GI2"/>
<dbReference type="STRING" id="3702.Q66GI2"/>
<dbReference type="GlyCosmos" id="Q66GI2">
    <property type="glycosylation" value="3 sites, No reported glycans"/>
</dbReference>
<dbReference type="GlyGen" id="Q66GI2">
    <property type="glycosylation" value="3 sites"/>
</dbReference>
<dbReference type="PaxDb" id="3702-AT3G13660.1"/>
<dbReference type="EnsemblPlants" id="AT3G13660.1">
    <property type="protein sequence ID" value="AT3G13660.1"/>
    <property type="gene ID" value="AT3G13660"/>
</dbReference>
<dbReference type="GeneID" id="820570"/>
<dbReference type="Gramene" id="AT3G13660.1">
    <property type="protein sequence ID" value="AT3G13660.1"/>
    <property type="gene ID" value="AT3G13660"/>
</dbReference>
<dbReference type="KEGG" id="ath:AT3G13660"/>
<dbReference type="Araport" id="AT3G13660"/>
<dbReference type="TAIR" id="AT3G13660"/>
<dbReference type="HOGENOM" id="CLU_087111_5_0_1"/>
<dbReference type="InParanoid" id="Q66GI2"/>
<dbReference type="OMA" id="MYAYSSH"/>
<dbReference type="OrthoDB" id="1864232at2759"/>
<dbReference type="PhylomeDB" id="Q66GI2"/>
<dbReference type="PRO" id="PR:Q66GI2"/>
<dbReference type="Proteomes" id="UP000006548">
    <property type="component" value="Chromosome 3"/>
</dbReference>
<dbReference type="ExpressionAtlas" id="Q66GI2">
    <property type="expression patterns" value="baseline and differential"/>
</dbReference>
<dbReference type="GO" id="GO:0048046">
    <property type="term" value="C:apoplast"/>
    <property type="evidence" value="ECO:0007669"/>
    <property type="project" value="UniProtKB-SubCell"/>
</dbReference>
<dbReference type="GO" id="GO:0009699">
    <property type="term" value="P:phenylpropanoid biosynthetic process"/>
    <property type="evidence" value="ECO:0007669"/>
    <property type="project" value="UniProtKB-ARBA"/>
</dbReference>
<dbReference type="Gene3D" id="2.40.480.10">
    <property type="entry name" value="Allene oxide cyclase-like"/>
    <property type="match status" value="1"/>
</dbReference>
<dbReference type="InterPro" id="IPR044859">
    <property type="entry name" value="Allene_oxi_cyc_Dirigent"/>
</dbReference>
<dbReference type="InterPro" id="IPR004265">
    <property type="entry name" value="Dirigent"/>
</dbReference>
<dbReference type="PANTHER" id="PTHR21495">
    <property type="entry name" value="NUCLEOPORIN-RELATED"/>
    <property type="match status" value="1"/>
</dbReference>
<dbReference type="Pfam" id="PF03018">
    <property type="entry name" value="Dirigent"/>
    <property type="match status" value="1"/>
</dbReference>
<proteinExistence type="evidence at transcript level"/>
<evidence type="ECO:0000250" key="1"/>
<evidence type="ECO:0000255" key="2"/>
<evidence type="ECO:0000305" key="3"/>
<keyword id="KW-0052">Apoplast</keyword>
<keyword id="KW-0325">Glycoprotein</keyword>
<keyword id="KW-1185">Reference proteome</keyword>
<keyword id="KW-0964">Secreted</keyword>
<organism>
    <name type="scientific">Arabidopsis thaliana</name>
    <name type="common">Mouse-ear cress</name>
    <dbReference type="NCBI Taxonomy" id="3702"/>
    <lineage>
        <taxon>Eukaryota</taxon>
        <taxon>Viridiplantae</taxon>
        <taxon>Streptophyta</taxon>
        <taxon>Embryophyta</taxon>
        <taxon>Tracheophyta</taxon>
        <taxon>Spermatophyta</taxon>
        <taxon>Magnoliopsida</taxon>
        <taxon>eudicotyledons</taxon>
        <taxon>Gunneridae</taxon>
        <taxon>Pentapetalae</taxon>
        <taxon>rosids</taxon>
        <taxon>malvids</taxon>
        <taxon>Brassicales</taxon>
        <taxon>Brassicaceae</taxon>
        <taxon>Camelineae</taxon>
        <taxon>Arabidopsis</taxon>
    </lineage>
</organism>
<feature type="chain" id="PRO_0000422853" description="Dirigent protein 22">
    <location>
        <begin position="1"/>
        <end position="125"/>
    </location>
</feature>
<feature type="glycosylation site" description="N-linked (GlcNAc...) asparagine" evidence="2">
    <location>
        <position position="8"/>
    </location>
</feature>
<feature type="glycosylation site" description="N-linked (GlcNAc...) asparagine" evidence="2">
    <location>
        <position position="30"/>
    </location>
</feature>
<feature type="glycosylation site" description="N-linked (GlcNAc...) asparagine" evidence="2">
    <location>
        <position position="65"/>
    </location>
</feature>